<accession>P0A9H8</accession>
<accession>P30010</accession>
<evidence type="ECO:0000250" key="1"/>
<evidence type="ECO:0000305" key="2"/>
<feature type="initiator methionine" description="Removed" evidence="1">
    <location>
        <position position="1"/>
    </location>
</feature>
<feature type="chain" id="PRO_0000089571" description="Cyclopropane-fatty-acyl-phospholipid synthase">
    <location>
        <begin position="2"/>
        <end position="382"/>
    </location>
</feature>
<feature type="active site" evidence="1">
    <location>
        <position position="354"/>
    </location>
</feature>
<feature type="binding site" evidence="1">
    <location>
        <begin position="137"/>
        <end position="138"/>
    </location>
    <ligand>
        <name>S-adenosyl-L-methionine</name>
        <dbReference type="ChEBI" id="CHEBI:59789"/>
    </ligand>
</feature>
<feature type="binding site" evidence="1">
    <location>
        <begin position="171"/>
        <end position="179"/>
    </location>
    <ligand>
        <name>S-adenosyl-L-methionine</name>
        <dbReference type="ChEBI" id="CHEBI:59789"/>
    </ligand>
</feature>
<feature type="binding site" evidence="1">
    <location>
        <begin position="197"/>
        <end position="202"/>
    </location>
    <ligand>
        <name>S-adenosyl-L-methionine</name>
        <dbReference type="ChEBI" id="CHEBI:59789"/>
    </ligand>
</feature>
<comment type="function">
    <text evidence="1">Transfers a methylene group from S-adenosyl-L-methionine to the cis double bond of an unsaturated fatty acid chain resulting in the replacement of the double bond with a methylene bridge.</text>
</comment>
<comment type="catalytic activity">
    <reaction>
        <text>a 1-acyl-2-(9Z)-enoyl-sn-glycero-3-phospholipid + S-adenosyl-L-methionine = a 1-acyl-2-(9-cyclopronane)-acyl-sn-glycero-3-phospholipid + S-adenosyl-L-homocysteine + H(+)</text>
        <dbReference type="Rhea" id="RHEA:11988"/>
        <dbReference type="ChEBI" id="CHEBI:15378"/>
        <dbReference type="ChEBI" id="CHEBI:57856"/>
        <dbReference type="ChEBI" id="CHEBI:59789"/>
        <dbReference type="ChEBI" id="CHEBI:76593"/>
        <dbReference type="ChEBI" id="CHEBI:76594"/>
        <dbReference type="EC" id="2.1.1.79"/>
    </reaction>
</comment>
<comment type="pathway">
    <text>Lipid metabolism; fatty acid biosynthesis.</text>
</comment>
<comment type="subcellular location">
    <subcellularLocation>
        <location evidence="2">Cytoplasm</location>
    </subcellularLocation>
</comment>
<comment type="similarity">
    <text evidence="2">Belongs to the CFA/CMAS family.</text>
</comment>
<keyword id="KW-0963">Cytoplasm</keyword>
<keyword id="KW-0444">Lipid biosynthesis</keyword>
<keyword id="KW-0443">Lipid metabolism</keyword>
<keyword id="KW-0489">Methyltransferase</keyword>
<keyword id="KW-1185">Reference proteome</keyword>
<keyword id="KW-0949">S-adenosyl-L-methionine</keyword>
<keyword id="KW-0808">Transferase</keyword>
<organism>
    <name type="scientific">Escherichia coli O6:H1 (strain CFT073 / ATCC 700928 / UPEC)</name>
    <dbReference type="NCBI Taxonomy" id="199310"/>
    <lineage>
        <taxon>Bacteria</taxon>
        <taxon>Pseudomonadati</taxon>
        <taxon>Pseudomonadota</taxon>
        <taxon>Gammaproteobacteria</taxon>
        <taxon>Enterobacterales</taxon>
        <taxon>Enterobacteriaceae</taxon>
        <taxon>Escherichia</taxon>
    </lineage>
</organism>
<sequence>MSSSCIEEVSVPDDNWYRIANELLSRAGIAINGSAPADIRVKNPDFFKRVLQEGSLGLGESYMDGWWECDRLDMFFSKVLRAGLENQLPHHFKDTLRIAGARLFNLQSKKRAWIVGKEHYDLGNDLFSRMLDPFMQYSCAYWKDADNLESAQQAKLKMICEKLQLKPGMRVLDIGCGWGGLAHYMASNYDVSVVGVTISAEQQKMAQERCEGLDVTILLQDYRDLNDQFDRIVSVGMFEHVGPKNYDTYFAVVDRNLKPEGIFLLHTIGSKKTDLNVDPWINKYIFPNGCLPSVRQIAQSSEPHFVMEDWHNFGADYDTTLMAWYERFLAAWPEIADNYSERFKRMFTYYLNACAGAFRARDIQLWQVVFSRGVENGLRVAR</sequence>
<gene>
    <name type="primary">cfa</name>
    <name type="ordered locus">c2055</name>
</gene>
<name>CFA_ECOL6</name>
<dbReference type="EC" id="2.1.1.79"/>
<dbReference type="EMBL" id="AE014075">
    <property type="protein sequence ID" value="AAN80515.1"/>
    <property type="molecule type" value="Genomic_DNA"/>
</dbReference>
<dbReference type="RefSeq" id="WP_000098896.1">
    <property type="nucleotide sequence ID" value="NZ_CP051263.1"/>
</dbReference>
<dbReference type="SMR" id="P0A9H8"/>
<dbReference type="STRING" id="199310.c2055"/>
<dbReference type="GeneID" id="93775816"/>
<dbReference type="KEGG" id="ecc:c2055"/>
<dbReference type="eggNOG" id="COG2230">
    <property type="taxonomic scope" value="Bacteria"/>
</dbReference>
<dbReference type="HOGENOM" id="CLU_026434_6_0_6"/>
<dbReference type="BioCyc" id="ECOL199310:C2055-MONOMER"/>
<dbReference type="SABIO-RK" id="P0A9H8"/>
<dbReference type="UniPathway" id="UPA00094"/>
<dbReference type="Proteomes" id="UP000001410">
    <property type="component" value="Chromosome"/>
</dbReference>
<dbReference type="GO" id="GO:0005737">
    <property type="term" value="C:cytoplasm"/>
    <property type="evidence" value="ECO:0007669"/>
    <property type="project" value="UniProtKB-SubCell"/>
</dbReference>
<dbReference type="GO" id="GO:0008825">
    <property type="term" value="F:cyclopropane-fatty-acyl-phospholipid synthase activity"/>
    <property type="evidence" value="ECO:0007669"/>
    <property type="project" value="UniProtKB-EC"/>
</dbReference>
<dbReference type="GO" id="GO:0006633">
    <property type="term" value="P:fatty acid biosynthetic process"/>
    <property type="evidence" value="ECO:0007669"/>
    <property type="project" value="UniProtKB-UniPathway"/>
</dbReference>
<dbReference type="GO" id="GO:0032259">
    <property type="term" value="P:methylation"/>
    <property type="evidence" value="ECO:0007669"/>
    <property type="project" value="UniProtKB-KW"/>
</dbReference>
<dbReference type="CDD" id="cd02440">
    <property type="entry name" value="AdoMet_MTases"/>
    <property type="match status" value="1"/>
</dbReference>
<dbReference type="FunFam" id="3.40.50.150:FF:000074">
    <property type="entry name" value="Cyclopropane-fatty-acyl-phospholipid synthase family protein"/>
    <property type="match status" value="1"/>
</dbReference>
<dbReference type="Gene3D" id="3.40.50.150">
    <property type="entry name" value="Vaccinia Virus protein VP39"/>
    <property type="match status" value="1"/>
</dbReference>
<dbReference type="InterPro" id="IPR050723">
    <property type="entry name" value="CFA/CMAS"/>
</dbReference>
<dbReference type="InterPro" id="IPR003333">
    <property type="entry name" value="CMAS"/>
</dbReference>
<dbReference type="InterPro" id="IPR029063">
    <property type="entry name" value="SAM-dependent_MTases_sf"/>
</dbReference>
<dbReference type="NCBIfam" id="NF008686">
    <property type="entry name" value="PRK11705.1"/>
    <property type="match status" value="1"/>
</dbReference>
<dbReference type="PANTHER" id="PTHR43667">
    <property type="entry name" value="CYCLOPROPANE-FATTY-ACYL-PHOSPHOLIPID SYNTHASE"/>
    <property type="match status" value="1"/>
</dbReference>
<dbReference type="PANTHER" id="PTHR43667:SF1">
    <property type="entry name" value="CYCLOPROPANE-FATTY-ACYL-PHOSPHOLIPID SYNTHASE"/>
    <property type="match status" value="1"/>
</dbReference>
<dbReference type="Pfam" id="PF02353">
    <property type="entry name" value="CMAS"/>
    <property type="match status" value="1"/>
</dbReference>
<dbReference type="PIRSF" id="PIRSF003085">
    <property type="entry name" value="CMAS"/>
    <property type="match status" value="1"/>
</dbReference>
<dbReference type="SUPFAM" id="SSF53335">
    <property type="entry name" value="S-adenosyl-L-methionine-dependent methyltransferases"/>
    <property type="match status" value="1"/>
</dbReference>
<protein>
    <recommendedName>
        <fullName>Cyclopropane-fatty-acyl-phospholipid synthase</fullName>
        <shortName>CFA synthase</shortName>
        <shortName>Cyclopropane fatty acid synthase</shortName>
        <ecNumber>2.1.1.79</ecNumber>
    </recommendedName>
</protein>
<proteinExistence type="inferred from homology"/>
<reference key="1">
    <citation type="journal article" date="2002" name="Proc. Natl. Acad. Sci. U.S.A.">
        <title>Extensive mosaic structure revealed by the complete genome sequence of uropathogenic Escherichia coli.</title>
        <authorList>
            <person name="Welch R.A."/>
            <person name="Burland V."/>
            <person name="Plunkett G. III"/>
            <person name="Redford P."/>
            <person name="Roesch P."/>
            <person name="Rasko D."/>
            <person name="Buckles E.L."/>
            <person name="Liou S.-R."/>
            <person name="Boutin A."/>
            <person name="Hackett J."/>
            <person name="Stroud D."/>
            <person name="Mayhew G.F."/>
            <person name="Rose D.J."/>
            <person name="Zhou S."/>
            <person name="Schwartz D.C."/>
            <person name="Perna N.T."/>
            <person name="Mobley H.L.T."/>
            <person name="Donnenberg M.S."/>
            <person name="Blattner F.R."/>
        </authorList>
    </citation>
    <scope>NUCLEOTIDE SEQUENCE [LARGE SCALE GENOMIC DNA]</scope>
    <source>
        <strain>CFT073 / ATCC 700928 / UPEC</strain>
    </source>
</reference>